<name>FADJ_SALTY</name>
<keyword id="KW-0963">Cytoplasm</keyword>
<keyword id="KW-0276">Fatty acid metabolism</keyword>
<keyword id="KW-0413">Isomerase</keyword>
<keyword id="KW-0442">Lipid degradation</keyword>
<keyword id="KW-0443">Lipid metabolism</keyword>
<keyword id="KW-0456">Lyase</keyword>
<keyword id="KW-0511">Multifunctional enzyme</keyword>
<keyword id="KW-0520">NAD</keyword>
<keyword id="KW-0560">Oxidoreductase</keyword>
<keyword id="KW-1185">Reference proteome</keyword>
<evidence type="ECO:0000255" key="1">
    <source>
        <dbReference type="HAMAP-Rule" id="MF_01617"/>
    </source>
</evidence>
<gene>
    <name evidence="1" type="primary">fadJ</name>
    <name type="ordered locus">STM2388</name>
</gene>
<sequence length="715" mass="77255">MTTTSAFMLNVRLDNVAVVAIDVPGEKVNTLKAEFATQVRAILKQIRENKALQGVVFISAKADNFIAGADINMIGHCQNAQEAETLARQGQQLMAEIQALPVPVIAAIHGACLGGGLEMALACHRRICTDDVKTVLGLPEVQLGLLPGSGGTQRLPRLVGVSTALDMILTGKQLRARQALKAGLVDDVVPQTILLEAAVELAKKERLAQRTLPVRERILAGPLGRALLFRLVRKKTAQKTQGNYPATERIIDVIETGLAQGSSSGYDAEARAFGELAMTPQSQALRAIFFASTEVKKDPGSDAPPGPLNSVGILGGGLMGGGIAWVTACKGGLPVRIKDINTQGINHALKYSWDLLETKVRRRHIKASERDKQLALISGSTDYRGFSHRDLVIEAVFEDLPLKQQMVAEVEQNCAAHTIFASNTSSLPIGDIAANAARPEQVIGLHFFSPVEKMPLVEVIPHASTSAQTIATTVKLAKKQGKTPIVVSDKAGFYVNRILAPYINEAIRMLTEGERVEHIDAALVKFGFPVGPIQLLDEVGIDTGTKIIPVLEAAYGERFSAPANVVASILNDDRKGRKNGRGFYLYGEKGRKSKKQVDPAIYKLIGVQGQSRLSAQQVAERCVMLMLNEAARCFDEKVIRSARDGDIGAVFGIGFPPFLGGPFRYMDALGPGEMVATLQRLAALYGPRYAPCEQLVRMAERREHFWTNGETDQGN</sequence>
<proteinExistence type="inferred from homology"/>
<accession>Q8ZNA7</accession>
<organism>
    <name type="scientific">Salmonella typhimurium (strain LT2 / SGSC1412 / ATCC 700720)</name>
    <dbReference type="NCBI Taxonomy" id="99287"/>
    <lineage>
        <taxon>Bacteria</taxon>
        <taxon>Pseudomonadati</taxon>
        <taxon>Pseudomonadota</taxon>
        <taxon>Gammaproteobacteria</taxon>
        <taxon>Enterobacterales</taxon>
        <taxon>Enterobacteriaceae</taxon>
        <taxon>Salmonella</taxon>
    </lineage>
</organism>
<feature type="chain" id="PRO_0000109307" description="Fatty acid oxidation complex subunit alpha">
    <location>
        <begin position="1"/>
        <end position="715"/>
    </location>
</feature>
<feature type="region of interest" description="Enoyl-CoA hydratase" evidence="1">
    <location>
        <begin position="1"/>
        <end position="190"/>
    </location>
</feature>
<feature type="region of interest" description="3-hydroxyacyl-CoA dehydrogenase" evidence="1">
    <location>
        <begin position="306"/>
        <end position="714"/>
    </location>
</feature>
<feature type="site" description="Important for catalytic activity" evidence="1">
    <location>
        <position position="118"/>
    </location>
</feature>
<feature type="site" description="Important for catalytic activity" evidence="1">
    <location>
        <position position="140"/>
    </location>
</feature>
<comment type="function">
    <text evidence="1">Catalyzes the formation of a hydroxyacyl-CoA by addition of water on enoyl-CoA. Also exhibits 3-hydroxyacyl-CoA epimerase and 3-hydroxyacyl-CoA dehydrogenase activities.</text>
</comment>
<comment type="catalytic activity">
    <reaction evidence="1">
        <text>a (3S)-3-hydroxyacyl-CoA = a (2E)-enoyl-CoA + H2O</text>
        <dbReference type="Rhea" id="RHEA:16105"/>
        <dbReference type="ChEBI" id="CHEBI:15377"/>
        <dbReference type="ChEBI" id="CHEBI:57318"/>
        <dbReference type="ChEBI" id="CHEBI:58856"/>
        <dbReference type="EC" id="4.2.1.17"/>
    </reaction>
</comment>
<comment type="catalytic activity">
    <reaction evidence="1">
        <text>a 4-saturated-(3S)-3-hydroxyacyl-CoA = a (3E)-enoyl-CoA + H2O</text>
        <dbReference type="Rhea" id="RHEA:20724"/>
        <dbReference type="ChEBI" id="CHEBI:15377"/>
        <dbReference type="ChEBI" id="CHEBI:58521"/>
        <dbReference type="ChEBI" id="CHEBI:137480"/>
        <dbReference type="EC" id="4.2.1.17"/>
    </reaction>
</comment>
<comment type="catalytic activity">
    <reaction evidence="1">
        <text>a (3S)-3-hydroxyacyl-CoA + NAD(+) = a 3-oxoacyl-CoA + NADH + H(+)</text>
        <dbReference type="Rhea" id="RHEA:22432"/>
        <dbReference type="ChEBI" id="CHEBI:15378"/>
        <dbReference type="ChEBI" id="CHEBI:57318"/>
        <dbReference type="ChEBI" id="CHEBI:57540"/>
        <dbReference type="ChEBI" id="CHEBI:57945"/>
        <dbReference type="ChEBI" id="CHEBI:90726"/>
        <dbReference type="EC" id="1.1.1.35"/>
    </reaction>
</comment>
<comment type="catalytic activity">
    <reaction evidence="1">
        <text>(3S)-3-hydroxybutanoyl-CoA = (3R)-3-hydroxybutanoyl-CoA</text>
        <dbReference type="Rhea" id="RHEA:21760"/>
        <dbReference type="ChEBI" id="CHEBI:57315"/>
        <dbReference type="ChEBI" id="CHEBI:57316"/>
        <dbReference type="EC" id="5.1.2.3"/>
    </reaction>
</comment>
<comment type="pathway">
    <text evidence="1">Lipid metabolism; fatty acid beta-oxidation.</text>
</comment>
<comment type="subunit">
    <text evidence="1">Heterotetramer of two alpha chains (FadJ) and two beta chains (FadI).</text>
</comment>
<comment type="subcellular location">
    <subcellularLocation>
        <location evidence="1">Cytoplasm</location>
    </subcellularLocation>
</comment>
<comment type="similarity">
    <text evidence="1">In the N-terminal section; belongs to the enoyl-CoA hydratase/isomerase family.</text>
</comment>
<comment type="similarity">
    <text evidence="1">In the central section; belongs to the 3-hydroxyacyl-CoA dehydrogenase family.</text>
</comment>
<dbReference type="EC" id="4.2.1.17" evidence="1"/>
<dbReference type="EC" id="5.1.2.3" evidence="1"/>
<dbReference type="EC" id="1.1.1.35" evidence="1"/>
<dbReference type="EMBL" id="AE006468">
    <property type="protein sequence ID" value="AAL21289.1"/>
    <property type="molecule type" value="Genomic_DNA"/>
</dbReference>
<dbReference type="RefSeq" id="WP_000214154.1">
    <property type="nucleotide sequence ID" value="NC_003197.2"/>
</dbReference>
<dbReference type="SMR" id="Q8ZNA7"/>
<dbReference type="STRING" id="99287.STM2388"/>
<dbReference type="PaxDb" id="99287-STM2388"/>
<dbReference type="KEGG" id="stm:STM2388"/>
<dbReference type="PATRIC" id="fig|99287.12.peg.2527"/>
<dbReference type="HOGENOM" id="CLU_009834_16_3_6"/>
<dbReference type="OMA" id="ESTTIRW"/>
<dbReference type="PhylomeDB" id="Q8ZNA7"/>
<dbReference type="BioCyc" id="SENT99287:STM2388-MONOMER"/>
<dbReference type="UniPathway" id="UPA00659"/>
<dbReference type="Proteomes" id="UP000001014">
    <property type="component" value="Chromosome"/>
</dbReference>
<dbReference type="GO" id="GO:0005737">
    <property type="term" value="C:cytoplasm"/>
    <property type="evidence" value="ECO:0007669"/>
    <property type="project" value="UniProtKB-SubCell"/>
</dbReference>
<dbReference type="GO" id="GO:0008692">
    <property type="term" value="F:3-hydroxybutyryl-CoA epimerase activity"/>
    <property type="evidence" value="ECO:0007669"/>
    <property type="project" value="UniProtKB-UniRule"/>
</dbReference>
<dbReference type="GO" id="GO:0004300">
    <property type="term" value="F:enoyl-CoA hydratase activity"/>
    <property type="evidence" value="ECO:0000318"/>
    <property type="project" value="GO_Central"/>
</dbReference>
<dbReference type="GO" id="GO:0016509">
    <property type="term" value="F:long-chain-3-hydroxyacyl-CoA dehydrogenase activity"/>
    <property type="evidence" value="ECO:0000318"/>
    <property type="project" value="GO_Central"/>
</dbReference>
<dbReference type="GO" id="GO:0070403">
    <property type="term" value="F:NAD+ binding"/>
    <property type="evidence" value="ECO:0007669"/>
    <property type="project" value="InterPro"/>
</dbReference>
<dbReference type="GO" id="GO:0006635">
    <property type="term" value="P:fatty acid beta-oxidation"/>
    <property type="evidence" value="ECO:0000318"/>
    <property type="project" value="GO_Central"/>
</dbReference>
<dbReference type="CDD" id="cd06558">
    <property type="entry name" value="crotonase-like"/>
    <property type="match status" value="1"/>
</dbReference>
<dbReference type="FunFam" id="1.10.1040.50:FF:000003">
    <property type="entry name" value="Fatty acid oxidation complex subunit alpha"/>
    <property type="match status" value="1"/>
</dbReference>
<dbReference type="FunFam" id="3.90.226.10:FF:000011">
    <property type="entry name" value="Fatty acid oxidation complex subunit alpha"/>
    <property type="match status" value="1"/>
</dbReference>
<dbReference type="FunFam" id="3.40.50.720:FF:000009">
    <property type="entry name" value="Fatty oxidation complex, alpha subunit"/>
    <property type="match status" value="1"/>
</dbReference>
<dbReference type="Gene3D" id="1.10.1040.50">
    <property type="match status" value="1"/>
</dbReference>
<dbReference type="Gene3D" id="3.90.226.10">
    <property type="entry name" value="2-enoyl-CoA Hydratase, Chain A, domain 1"/>
    <property type="match status" value="1"/>
</dbReference>
<dbReference type="Gene3D" id="3.40.50.720">
    <property type="entry name" value="NAD(P)-binding Rossmann-like Domain"/>
    <property type="match status" value="1"/>
</dbReference>
<dbReference type="HAMAP" id="MF_01617">
    <property type="entry name" value="FadJ"/>
    <property type="match status" value="1"/>
</dbReference>
<dbReference type="InterPro" id="IPR006180">
    <property type="entry name" value="3-OHacyl-CoA_DH_CS"/>
</dbReference>
<dbReference type="InterPro" id="IPR006176">
    <property type="entry name" value="3-OHacyl-CoA_DH_NAD-bd"/>
</dbReference>
<dbReference type="InterPro" id="IPR006108">
    <property type="entry name" value="3HC_DH_C"/>
</dbReference>
<dbReference type="InterPro" id="IPR008927">
    <property type="entry name" value="6-PGluconate_DH-like_C_sf"/>
</dbReference>
<dbReference type="InterPro" id="IPR029045">
    <property type="entry name" value="ClpP/crotonase-like_dom_sf"/>
</dbReference>
<dbReference type="InterPro" id="IPR001753">
    <property type="entry name" value="Enoyl-CoA_hydra/iso"/>
</dbReference>
<dbReference type="InterPro" id="IPR050136">
    <property type="entry name" value="FA_oxidation_alpha_subunit"/>
</dbReference>
<dbReference type="InterPro" id="IPR012802">
    <property type="entry name" value="FadJ"/>
</dbReference>
<dbReference type="InterPro" id="IPR036291">
    <property type="entry name" value="NAD(P)-bd_dom_sf"/>
</dbReference>
<dbReference type="NCBIfam" id="TIGR02440">
    <property type="entry name" value="FadJ"/>
    <property type="match status" value="1"/>
</dbReference>
<dbReference type="NCBIfam" id="NF008363">
    <property type="entry name" value="PRK11154.1"/>
    <property type="match status" value="1"/>
</dbReference>
<dbReference type="PANTHER" id="PTHR43612">
    <property type="entry name" value="TRIFUNCTIONAL ENZYME SUBUNIT ALPHA"/>
    <property type="match status" value="1"/>
</dbReference>
<dbReference type="PANTHER" id="PTHR43612:SF3">
    <property type="entry name" value="TRIFUNCTIONAL ENZYME SUBUNIT ALPHA, MITOCHONDRIAL"/>
    <property type="match status" value="1"/>
</dbReference>
<dbReference type="Pfam" id="PF00725">
    <property type="entry name" value="3HCDH"/>
    <property type="match status" value="1"/>
</dbReference>
<dbReference type="Pfam" id="PF02737">
    <property type="entry name" value="3HCDH_N"/>
    <property type="match status" value="1"/>
</dbReference>
<dbReference type="Pfam" id="PF00378">
    <property type="entry name" value="ECH_1"/>
    <property type="match status" value="1"/>
</dbReference>
<dbReference type="SUPFAM" id="SSF48179">
    <property type="entry name" value="6-phosphogluconate dehydrogenase C-terminal domain-like"/>
    <property type="match status" value="2"/>
</dbReference>
<dbReference type="SUPFAM" id="SSF52096">
    <property type="entry name" value="ClpP/crotonase"/>
    <property type="match status" value="1"/>
</dbReference>
<dbReference type="SUPFAM" id="SSF51735">
    <property type="entry name" value="NAD(P)-binding Rossmann-fold domains"/>
    <property type="match status" value="1"/>
</dbReference>
<dbReference type="PROSITE" id="PS00067">
    <property type="entry name" value="3HCDH"/>
    <property type="match status" value="1"/>
</dbReference>
<reference key="1">
    <citation type="journal article" date="2001" name="Nature">
        <title>Complete genome sequence of Salmonella enterica serovar Typhimurium LT2.</title>
        <authorList>
            <person name="McClelland M."/>
            <person name="Sanderson K.E."/>
            <person name="Spieth J."/>
            <person name="Clifton S.W."/>
            <person name="Latreille P."/>
            <person name="Courtney L."/>
            <person name="Porwollik S."/>
            <person name="Ali J."/>
            <person name="Dante M."/>
            <person name="Du F."/>
            <person name="Hou S."/>
            <person name="Layman D."/>
            <person name="Leonard S."/>
            <person name="Nguyen C."/>
            <person name="Scott K."/>
            <person name="Holmes A."/>
            <person name="Grewal N."/>
            <person name="Mulvaney E."/>
            <person name="Ryan E."/>
            <person name="Sun H."/>
            <person name="Florea L."/>
            <person name="Miller W."/>
            <person name="Stoneking T."/>
            <person name="Nhan M."/>
            <person name="Waterston R."/>
            <person name="Wilson R.K."/>
        </authorList>
    </citation>
    <scope>NUCLEOTIDE SEQUENCE [LARGE SCALE GENOMIC DNA]</scope>
    <source>
        <strain>LT2 / SGSC1412 / ATCC 700720</strain>
    </source>
</reference>
<protein>
    <recommendedName>
        <fullName evidence="1">Fatty acid oxidation complex subunit alpha</fullName>
    </recommendedName>
    <domain>
        <recommendedName>
            <fullName evidence="1">Enoyl-CoA hydratase/3-hydroxybutyryl-CoA epimerase</fullName>
            <ecNumber evidence="1">4.2.1.17</ecNumber>
            <ecNumber evidence="1">5.1.2.3</ecNumber>
        </recommendedName>
    </domain>
    <domain>
        <recommendedName>
            <fullName evidence="1">3-hydroxyacyl-CoA dehydrogenase</fullName>
            <ecNumber evidence="1">1.1.1.35</ecNumber>
        </recommendedName>
    </domain>
</protein>